<name>YFMI_BACSU</name>
<keyword id="KW-1003">Cell membrane</keyword>
<keyword id="KW-0472">Membrane</keyword>
<keyword id="KW-1185">Reference proteome</keyword>
<keyword id="KW-0812">Transmembrane</keyword>
<keyword id="KW-1133">Transmembrane helix</keyword>
<keyword id="KW-0813">Transport</keyword>
<dbReference type="EMBL" id="D86417">
    <property type="protein sequence ID" value="BAA22323.1"/>
    <property type="molecule type" value="Genomic_DNA"/>
</dbReference>
<dbReference type="EMBL" id="AL009126">
    <property type="protein sequence ID" value="CAB12575.1"/>
    <property type="molecule type" value="Genomic_DNA"/>
</dbReference>
<dbReference type="PIR" id="H69812">
    <property type="entry name" value="H69812"/>
</dbReference>
<dbReference type="RefSeq" id="NP_388627.1">
    <property type="nucleotide sequence ID" value="NC_000964.3"/>
</dbReference>
<dbReference type="RefSeq" id="WP_003233743.1">
    <property type="nucleotide sequence ID" value="NZ_OZ025638.1"/>
</dbReference>
<dbReference type="SMR" id="O34440"/>
<dbReference type="FunCoup" id="O34440">
    <property type="interactions" value="12"/>
</dbReference>
<dbReference type="STRING" id="224308.BSU07460"/>
<dbReference type="PaxDb" id="224308-BSU07460"/>
<dbReference type="EnsemblBacteria" id="CAB12575">
    <property type="protein sequence ID" value="CAB12575"/>
    <property type="gene ID" value="BSU_07460"/>
</dbReference>
<dbReference type="GeneID" id="936105"/>
<dbReference type="KEGG" id="bsu:BSU07460"/>
<dbReference type="PATRIC" id="fig|224308.179.peg.811"/>
<dbReference type="eggNOG" id="COG2211">
    <property type="taxonomic scope" value="Bacteria"/>
</dbReference>
<dbReference type="InParanoid" id="O34440"/>
<dbReference type="OrthoDB" id="2351575at2"/>
<dbReference type="BioCyc" id="BSUB:BSU07460-MONOMER"/>
<dbReference type="Proteomes" id="UP000001570">
    <property type="component" value="Chromosome"/>
</dbReference>
<dbReference type="GO" id="GO:0005886">
    <property type="term" value="C:plasma membrane"/>
    <property type="evidence" value="ECO:0000318"/>
    <property type="project" value="GO_Central"/>
</dbReference>
<dbReference type="GO" id="GO:0015562">
    <property type="term" value="F:efflux transmembrane transporter activity"/>
    <property type="evidence" value="ECO:0000318"/>
    <property type="project" value="GO_Central"/>
</dbReference>
<dbReference type="GO" id="GO:0046677">
    <property type="term" value="P:response to antibiotic"/>
    <property type="evidence" value="ECO:0000318"/>
    <property type="project" value="GO_Central"/>
</dbReference>
<dbReference type="CDD" id="cd06173">
    <property type="entry name" value="MFS_MefA_like"/>
    <property type="match status" value="1"/>
</dbReference>
<dbReference type="Gene3D" id="1.20.1250.20">
    <property type="entry name" value="MFS general substrate transporter like domains"/>
    <property type="match status" value="1"/>
</dbReference>
<dbReference type="InterPro" id="IPR011701">
    <property type="entry name" value="MFS"/>
</dbReference>
<dbReference type="InterPro" id="IPR036259">
    <property type="entry name" value="MFS_trans_sf"/>
</dbReference>
<dbReference type="PANTHER" id="PTHR23513">
    <property type="entry name" value="INTEGRAL MEMBRANE EFFLUX PROTEIN-RELATED"/>
    <property type="match status" value="1"/>
</dbReference>
<dbReference type="PANTHER" id="PTHR23513:SF19">
    <property type="entry name" value="MAJOR FACILITATOR SUPERFAMILY (MFS) PROFILE DOMAIN-CONTAINING PROTEIN"/>
    <property type="match status" value="1"/>
</dbReference>
<dbReference type="Pfam" id="PF07690">
    <property type="entry name" value="MFS_1"/>
    <property type="match status" value="1"/>
</dbReference>
<dbReference type="SUPFAM" id="SSF103473">
    <property type="entry name" value="MFS general substrate transporter"/>
    <property type="match status" value="1"/>
</dbReference>
<proteinExistence type="inferred from homology"/>
<organism>
    <name type="scientific">Bacillus subtilis (strain 168)</name>
    <dbReference type="NCBI Taxonomy" id="224308"/>
    <lineage>
        <taxon>Bacteria</taxon>
        <taxon>Bacillati</taxon>
        <taxon>Bacillota</taxon>
        <taxon>Bacilli</taxon>
        <taxon>Bacillales</taxon>
        <taxon>Bacillaceae</taxon>
        <taxon>Bacillus</taxon>
    </lineage>
</organism>
<protein>
    <recommendedName>
        <fullName>Uncharacterized MFS-type transporter YfmI</fullName>
    </recommendedName>
</protein>
<comment type="subcellular location">
    <subcellularLocation>
        <location evidence="2">Cell membrane</location>
        <topology evidence="2">Multi-pass membrane protein</topology>
    </subcellularLocation>
</comment>
<comment type="similarity">
    <text evidence="2">Belongs to the major facilitator superfamily.</text>
</comment>
<reference key="1">
    <citation type="journal article" date="1997" name="Gene">
        <title>Cloning and sequencing of a 35.7 kb in the 70 degree-73 degree region of the Bacillus subtilis genome reveal genes for a new two-component system, three spore germination proteins, an iron uptake system and a general stress response protein.</title>
        <authorList>
            <person name="Yamamoto H."/>
            <person name="Uchiyama S."/>
            <person name="Nugroho F.A."/>
            <person name="Sekiguchi J."/>
        </authorList>
    </citation>
    <scope>NUCLEOTIDE SEQUENCE [GENOMIC DNA]</scope>
    <source>
        <strain>168 / AC327</strain>
    </source>
</reference>
<reference key="2">
    <citation type="journal article" date="1997" name="Nature">
        <title>The complete genome sequence of the Gram-positive bacterium Bacillus subtilis.</title>
        <authorList>
            <person name="Kunst F."/>
            <person name="Ogasawara N."/>
            <person name="Moszer I."/>
            <person name="Albertini A.M."/>
            <person name="Alloni G."/>
            <person name="Azevedo V."/>
            <person name="Bertero M.G."/>
            <person name="Bessieres P."/>
            <person name="Bolotin A."/>
            <person name="Borchert S."/>
            <person name="Borriss R."/>
            <person name="Boursier L."/>
            <person name="Brans A."/>
            <person name="Braun M."/>
            <person name="Brignell S.C."/>
            <person name="Bron S."/>
            <person name="Brouillet S."/>
            <person name="Bruschi C.V."/>
            <person name="Caldwell B."/>
            <person name="Capuano V."/>
            <person name="Carter N.M."/>
            <person name="Choi S.-K."/>
            <person name="Codani J.-J."/>
            <person name="Connerton I.F."/>
            <person name="Cummings N.J."/>
            <person name="Daniel R.A."/>
            <person name="Denizot F."/>
            <person name="Devine K.M."/>
            <person name="Duesterhoeft A."/>
            <person name="Ehrlich S.D."/>
            <person name="Emmerson P.T."/>
            <person name="Entian K.-D."/>
            <person name="Errington J."/>
            <person name="Fabret C."/>
            <person name="Ferrari E."/>
            <person name="Foulger D."/>
            <person name="Fritz C."/>
            <person name="Fujita M."/>
            <person name="Fujita Y."/>
            <person name="Fuma S."/>
            <person name="Galizzi A."/>
            <person name="Galleron N."/>
            <person name="Ghim S.-Y."/>
            <person name="Glaser P."/>
            <person name="Goffeau A."/>
            <person name="Golightly E.J."/>
            <person name="Grandi G."/>
            <person name="Guiseppi G."/>
            <person name="Guy B.J."/>
            <person name="Haga K."/>
            <person name="Haiech J."/>
            <person name="Harwood C.R."/>
            <person name="Henaut A."/>
            <person name="Hilbert H."/>
            <person name="Holsappel S."/>
            <person name="Hosono S."/>
            <person name="Hullo M.-F."/>
            <person name="Itaya M."/>
            <person name="Jones L.-M."/>
            <person name="Joris B."/>
            <person name="Karamata D."/>
            <person name="Kasahara Y."/>
            <person name="Klaerr-Blanchard M."/>
            <person name="Klein C."/>
            <person name="Kobayashi Y."/>
            <person name="Koetter P."/>
            <person name="Koningstein G."/>
            <person name="Krogh S."/>
            <person name="Kumano M."/>
            <person name="Kurita K."/>
            <person name="Lapidus A."/>
            <person name="Lardinois S."/>
            <person name="Lauber J."/>
            <person name="Lazarevic V."/>
            <person name="Lee S.-M."/>
            <person name="Levine A."/>
            <person name="Liu H."/>
            <person name="Masuda S."/>
            <person name="Mauel C."/>
            <person name="Medigue C."/>
            <person name="Medina N."/>
            <person name="Mellado R.P."/>
            <person name="Mizuno M."/>
            <person name="Moestl D."/>
            <person name="Nakai S."/>
            <person name="Noback M."/>
            <person name="Noone D."/>
            <person name="O'Reilly M."/>
            <person name="Ogawa K."/>
            <person name="Ogiwara A."/>
            <person name="Oudega B."/>
            <person name="Park S.-H."/>
            <person name="Parro V."/>
            <person name="Pohl T.M."/>
            <person name="Portetelle D."/>
            <person name="Porwollik S."/>
            <person name="Prescott A.M."/>
            <person name="Presecan E."/>
            <person name="Pujic P."/>
            <person name="Purnelle B."/>
            <person name="Rapoport G."/>
            <person name="Rey M."/>
            <person name="Reynolds S."/>
            <person name="Rieger M."/>
            <person name="Rivolta C."/>
            <person name="Rocha E."/>
            <person name="Roche B."/>
            <person name="Rose M."/>
            <person name="Sadaie Y."/>
            <person name="Sato T."/>
            <person name="Scanlan E."/>
            <person name="Schleich S."/>
            <person name="Schroeter R."/>
            <person name="Scoffone F."/>
            <person name="Sekiguchi J."/>
            <person name="Sekowska A."/>
            <person name="Seror S.J."/>
            <person name="Serror P."/>
            <person name="Shin B.-S."/>
            <person name="Soldo B."/>
            <person name="Sorokin A."/>
            <person name="Tacconi E."/>
            <person name="Takagi T."/>
            <person name="Takahashi H."/>
            <person name="Takemaru K."/>
            <person name="Takeuchi M."/>
            <person name="Tamakoshi A."/>
            <person name="Tanaka T."/>
            <person name="Terpstra P."/>
            <person name="Tognoni A."/>
            <person name="Tosato V."/>
            <person name="Uchiyama S."/>
            <person name="Vandenbol M."/>
            <person name="Vannier F."/>
            <person name="Vassarotti A."/>
            <person name="Viari A."/>
            <person name="Wambutt R."/>
            <person name="Wedler E."/>
            <person name="Wedler H."/>
            <person name="Weitzenegger T."/>
            <person name="Winters P."/>
            <person name="Wipat A."/>
            <person name="Yamamoto H."/>
            <person name="Yamane K."/>
            <person name="Yasumoto K."/>
            <person name="Yata K."/>
            <person name="Yoshida K."/>
            <person name="Yoshikawa H.-F."/>
            <person name="Zumstein E."/>
            <person name="Yoshikawa H."/>
            <person name="Danchin A."/>
        </authorList>
    </citation>
    <scope>NUCLEOTIDE SEQUENCE [LARGE SCALE GENOMIC DNA]</scope>
    <source>
        <strain>168</strain>
    </source>
</reference>
<feature type="chain" id="PRO_0000359957" description="Uncharacterized MFS-type transporter YfmI">
    <location>
        <begin position="1"/>
        <end position="406"/>
    </location>
</feature>
<feature type="transmembrane region" description="Helical" evidence="1">
    <location>
        <begin position="7"/>
        <end position="27"/>
    </location>
</feature>
<feature type="transmembrane region" description="Helical" evidence="1">
    <location>
        <begin position="43"/>
        <end position="63"/>
    </location>
</feature>
<feature type="transmembrane region" description="Helical" evidence="1">
    <location>
        <begin position="69"/>
        <end position="89"/>
    </location>
</feature>
<feature type="transmembrane region" description="Helical" evidence="1">
    <location>
        <begin position="98"/>
        <end position="118"/>
    </location>
</feature>
<feature type="transmembrane region" description="Helical" evidence="1">
    <location>
        <begin position="155"/>
        <end position="175"/>
    </location>
</feature>
<feature type="transmembrane region" description="Helical" evidence="1">
    <location>
        <begin position="220"/>
        <end position="240"/>
    </location>
</feature>
<feature type="transmembrane region" description="Helical" evidence="1">
    <location>
        <begin position="253"/>
        <end position="273"/>
    </location>
</feature>
<feature type="transmembrane region" description="Helical" evidence="1">
    <location>
        <begin position="297"/>
        <end position="317"/>
    </location>
</feature>
<feature type="transmembrane region" description="Helical" evidence="1">
    <location>
        <begin position="352"/>
        <end position="372"/>
    </location>
</feature>
<feature type="transmembrane region" description="Helical" evidence="1">
    <location>
        <begin position="374"/>
        <end position="394"/>
    </location>
</feature>
<gene>
    <name type="primary">yfmI</name>
    <name type="ordered locus">BSU07460</name>
</gene>
<accession>O34440</accession>
<accession>Q79ES8</accession>
<evidence type="ECO:0000255" key="1"/>
<evidence type="ECO:0000305" key="2"/>
<sequence length="406" mass="45606">MSKGYYSILFSQTTTNLGFSLYTMVVISFLFKMTNSTTIASMVTLISIIFRIFGSAILPLITIRLKLPLTIIISQLIQMLLLICLFYALLRTYSNQTLILVFIIISCISFFNGWFSPLKSAIIGEIISPDRRVKANGLLSTVDQTFQFVGWSLGGLIIAFLGEGYTIILTIFLLFTSLLSLLFCLPHGHANSVIREKNSPNKSIVSGWRYLFSQKKLRTIIIMDLIESWAGMIWIGSVSLAFVNEVLHKGESWWGFINGAYYLGSMIGGFIIYKLSERFQNKLINFMLIGAVSYGSLTLIYGFISNSYLALILVLFMGPAYILRDLTQETLIQNITTEQTRINIMSARSSLVQFIFMFSILAIGAISDFLGVRLVYVSAGILLLVSAIYGFSQLQFKKKVNKHISF</sequence>